<keyword id="KW-0249">Electron transport</keyword>
<keyword id="KW-0285">Flavoprotein</keyword>
<keyword id="KW-0288">FMN</keyword>
<keyword id="KW-0520">NAD</keyword>
<keyword id="KW-1185">Reference proteome</keyword>
<keyword id="KW-0813">Transport</keyword>
<dbReference type="EMBL" id="FULE01000022">
    <property type="protein sequence ID" value="SJN56019.1"/>
    <property type="molecule type" value="Genomic_DNA"/>
</dbReference>
<dbReference type="RefSeq" id="WP_077334998.1">
    <property type="nucleotide sequence ID" value="NZ_FULE01000022.1"/>
</dbReference>
<dbReference type="SMR" id="A0A1R4LHW6"/>
<dbReference type="STRING" id="1123498.VR7878_01555"/>
<dbReference type="OrthoDB" id="9812295at2"/>
<dbReference type="Proteomes" id="UP000188276">
    <property type="component" value="Unassembled WGS sequence"/>
</dbReference>
<dbReference type="GO" id="GO:0005829">
    <property type="term" value="C:cytosol"/>
    <property type="evidence" value="ECO:0007669"/>
    <property type="project" value="TreeGrafter"/>
</dbReference>
<dbReference type="GO" id="GO:0050446">
    <property type="term" value="F:azobenzene reductase activity"/>
    <property type="evidence" value="ECO:0007669"/>
    <property type="project" value="UniProtKB-EC"/>
</dbReference>
<dbReference type="GO" id="GO:0010181">
    <property type="term" value="F:FMN binding"/>
    <property type="evidence" value="ECO:0007669"/>
    <property type="project" value="TreeGrafter"/>
</dbReference>
<dbReference type="Gene3D" id="3.40.50.360">
    <property type="match status" value="1"/>
</dbReference>
<dbReference type="InterPro" id="IPR029039">
    <property type="entry name" value="Flavoprotein-like_sf"/>
</dbReference>
<dbReference type="InterPro" id="IPR005025">
    <property type="entry name" value="FMN_Rdtase-like_dom"/>
</dbReference>
<dbReference type="InterPro" id="IPR050712">
    <property type="entry name" value="NAD(P)H-dep_reductase"/>
</dbReference>
<dbReference type="PANTHER" id="PTHR30543">
    <property type="entry name" value="CHROMATE REDUCTASE"/>
    <property type="match status" value="1"/>
</dbReference>
<dbReference type="PANTHER" id="PTHR30543:SF21">
    <property type="entry name" value="NAD(P)H-DEPENDENT FMN REDUCTASE LOT6"/>
    <property type="match status" value="1"/>
</dbReference>
<dbReference type="Pfam" id="PF03358">
    <property type="entry name" value="FMN_red"/>
    <property type="match status" value="1"/>
</dbReference>
<dbReference type="SUPFAM" id="SSF52218">
    <property type="entry name" value="Flavoproteins"/>
    <property type="match status" value="1"/>
</dbReference>
<sequence length="202" mass="22825">MNYLAIVGTNSEVSTNRMLLQFMQRHFQAQAQLELYEIRDLPAFYEADDDQVPQEVTSLSDKIRQADGVIIATPEYDHAIPAVLKSALEWISYTSQALTDKPVLIVGASHGALGSSRAQAHLRQILDSPELAARLMPSSEFLLGKSQAAFNRSGQLIDEHKLAELDEIFREFVLFTEMITKLLSERTIIKKDKKYAWQTREA</sequence>
<name>CRDA_VIBR1</name>
<gene>
    <name evidence="2" type="primary">crdA</name>
    <name evidence="4" type="synonym">azr</name>
    <name evidence="4" type="ORF">VR7878_01555</name>
</gene>
<protein>
    <recommendedName>
        <fullName evidence="2">NADH:(hydroxy)cinnamate reductase subunit CrdA</fullName>
    </recommendedName>
    <alternativeName>
        <fullName evidence="2">NADH:cinnamate reductase subunit CrdA</fullName>
    </alternativeName>
</protein>
<feature type="chain" id="PRO_0000460736" description="NADH:(hydroxy)cinnamate reductase subunit CrdA">
    <location>
        <begin position="1"/>
        <end position="202"/>
    </location>
</feature>
<proteinExistence type="evidence at protein level"/>
<reference key="1">
    <citation type="submission" date="2017-02" db="EMBL/GenBank/DDBJ databases">
        <authorList>
            <person name="Rodrigo-Torres L."/>
            <person name="Arahal R.D."/>
            <person name="Lucena T."/>
        </authorList>
    </citation>
    <scope>NUCLEOTIDE SEQUENCE [LARGE SCALE GENOMIC DNA]</scope>
    <source>
        <strain>DSM 16370 / JCM 11486 / BCRC 17186 / CECT 7878 / LMG 23124 / VR1</strain>
    </source>
</reference>
<reference key="2">
    <citation type="journal article" date="2024" name="Biochemistry (Mosc.)">
        <title>A Redox-Regulated, Heterodimeric NADH:cinnamate Reductase in Vibrio ruber.</title>
        <authorList>
            <person name="Bertsova Y.V."/>
            <person name="Serebryakova M.V."/>
            <person name="Anashkin V.A."/>
            <person name="Baykov A.A."/>
            <person name="Bogachev A.V."/>
        </authorList>
    </citation>
    <scope>FUNCTION</scope>
    <scope>COFACTOR</scope>
    <scope>SUBUNIT</scope>
    <scope>DOMAIN</scope>
    <source>
        <strain>DSM 16370 / JCM 11486 / BCRC 17186 / CECT 7878 / LMG 23124 / VR1</strain>
    </source>
</reference>
<organism>
    <name type="scientific">Vibrio ruber (strain DSM 16370 / JCM 11486 / BCRC 17186 / CECT 7878 / LMG 23124 / VR1)</name>
    <dbReference type="NCBI Taxonomy" id="1123498"/>
    <lineage>
        <taxon>Bacteria</taxon>
        <taxon>Pseudomonadati</taxon>
        <taxon>Pseudomonadota</taxon>
        <taxon>Gammaproteobacteria</taxon>
        <taxon>Vibrionales</taxon>
        <taxon>Vibrionaceae</taxon>
        <taxon>Vibrio</taxon>
    </lineage>
</organism>
<evidence type="ECO:0000269" key="1">
    <source>
    </source>
</evidence>
<evidence type="ECO:0000303" key="2">
    <source>
    </source>
</evidence>
<evidence type="ECO:0000305" key="3"/>
<evidence type="ECO:0000312" key="4">
    <source>
        <dbReference type="EMBL" id="SJN56019.1"/>
    </source>
</evidence>
<accession>A0A1R4LHW6</accession>
<comment type="function">
    <text evidence="1">Component of the NADH:(hydroxy)cinnamate reductase. CrdA is probably reduced by NADH and then transfers the electrons to the catalytic center of CrdB. Is likely involved in protecting V.ruber from (hydroxy)cinnamate poisoning.</text>
</comment>
<comment type="cofactor">
    <cofactor evidence="1">
        <name>FMN</name>
        <dbReference type="ChEBI" id="CHEBI:58210"/>
    </cofactor>
    <text evidence="1">Binds 1 FMN non-covalently per subunit.</text>
</comment>
<comment type="subunit">
    <text evidence="1">NADH:(hydroxy)cinnamate reductase Crd is a heterodimer composed of CrdA and CrdB subunits, encoded by adjacent genes.</text>
</comment>
<comment type="domain">
    <text evidence="1">CrdA is formed by a single NADH:flavin domain, which is homologous to the analogous N-terminal domain of CrdB (51% identity, 65% similarity).</text>
</comment>
<comment type="similarity">
    <text evidence="3">Belongs to the NADH-dependent flavin reductase family.</text>
</comment>